<feature type="chain" id="PRO_1000123069" description="Lipid-A-disaccharide synthase">
    <location>
        <begin position="1"/>
        <end position="385"/>
    </location>
</feature>
<keyword id="KW-0328">Glycosyltransferase</keyword>
<keyword id="KW-0441">Lipid A biosynthesis</keyword>
<keyword id="KW-0444">Lipid biosynthesis</keyword>
<keyword id="KW-0443">Lipid metabolism</keyword>
<keyword id="KW-0808">Transferase</keyword>
<evidence type="ECO:0000255" key="1">
    <source>
        <dbReference type="HAMAP-Rule" id="MF_00392"/>
    </source>
</evidence>
<comment type="function">
    <text evidence="1">Condensation of UDP-2,3-diacylglucosamine and 2,3-diacylglucosamine-1-phosphate to form lipid A disaccharide, a precursor of lipid A, a phosphorylated glycolipid that anchors the lipopolysaccharide to the outer membrane of the cell.</text>
</comment>
<comment type="catalytic activity">
    <reaction evidence="1">
        <text>a lipid X + a UDP-2-N,3-O-bis[(3R)-3-hydroxyacyl]-alpha-D-glucosamine = a lipid A disaccharide + UDP + H(+)</text>
        <dbReference type="Rhea" id="RHEA:67828"/>
        <dbReference type="ChEBI" id="CHEBI:15378"/>
        <dbReference type="ChEBI" id="CHEBI:58223"/>
        <dbReference type="ChEBI" id="CHEBI:137748"/>
        <dbReference type="ChEBI" id="CHEBI:176338"/>
        <dbReference type="ChEBI" id="CHEBI:176343"/>
        <dbReference type="EC" id="2.4.1.182"/>
    </reaction>
</comment>
<comment type="pathway">
    <text evidence="1">Bacterial outer membrane biogenesis; LPS lipid A biosynthesis.</text>
</comment>
<comment type="similarity">
    <text evidence="1">Belongs to the LpxB family.</text>
</comment>
<sequence length="385" mass="42557">MIQAPRIAIIAGEASGDHLGAGLIQQLRLHFATAEFIGIGGDMMRSAGCQTWFDTSELAVMGLTEVLRHLPRLLKIRREFCKRALAWHPDVLIGIDAPDFNLTVERWFKQRHIRTVHYVSPSIWAWREKRAAKIGASVDRVLCLFPMEPPIYARYGIDARFVGHPMADEIPYQTDRATARTALGLPLLSPVLAVLPGSRHSEISQLGNTFLEAAGQLSEHLPGLHVVIPAANTQCKPLLAEQLSRSTLPVMHSHLLDSSARTAMLAADVVLVASGTATLEAMLLKRPMVVAYKVAPLTYRIVKTLKLLKINRFALPNILAGEDLVPELIQKDCTAPALCAALLDCFKHPQKVTALQNRYLQLHTQLRRNASTRAAEAIAELLQQR</sequence>
<proteinExistence type="inferred from homology"/>
<protein>
    <recommendedName>
        <fullName evidence="1">Lipid-A-disaccharide synthase</fullName>
        <ecNumber evidence="1">2.4.1.182</ecNumber>
    </recommendedName>
</protein>
<name>LPXB_XYLF2</name>
<reference key="1">
    <citation type="journal article" date="2010" name="J. Bacteriol.">
        <title>Whole genome sequences of two Xylella fastidiosa strains (M12 and M23) causing almond leaf scorch disease in California.</title>
        <authorList>
            <person name="Chen J."/>
            <person name="Xie G."/>
            <person name="Han S."/>
            <person name="Chertkov O."/>
            <person name="Sims D."/>
            <person name="Civerolo E.L."/>
        </authorList>
    </citation>
    <scope>NUCLEOTIDE SEQUENCE [LARGE SCALE GENOMIC DNA]</scope>
    <source>
        <strain>M23</strain>
    </source>
</reference>
<dbReference type="EC" id="2.4.1.182" evidence="1"/>
<dbReference type="EMBL" id="CP001011">
    <property type="protein sequence ID" value="ACB91766.1"/>
    <property type="molecule type" value="Genomic_DNA"/>
</dbReference>
<dbReference type="SMR" id="B2I7N8"/>
<dbReference type="CAZy" id="GT19">
    <property type="family name" value="Glycosyltransferase Family 19"/>
</dbReference>
<dbReference type="KEGG" id="xfn:XfasM23_0318"/>
<dbReference type="HOGENOM" id="CLU_036577_3_0_6"/>
<dbReference type="UniPathway" id="UPA00973"/>
<dbReference type="Proteomes" id="UP000001698">
    <property type="component" value="Chromosome"/>
</dbReference>
<dbReference type="GO" id="GO:0016020">
    <property type="term" value="C:membrane"/>
    <property type="evidence" value="ECO:0007669"/>
    <property type="project" value="GOC"/>
</dbReference>
<dbReference type="GO" id="GO:0008915">
    <property type="term" value="F:lipid-A-disaccharide synthase activity"/>
    <property type="evidence" value="ECO:0007669"/>
    <property type="project" value="UniProtKB-UniRule"/>
</dbReference>
<dbReference type="GO" id="GO:0005543">
    <property type="term" value="F:phospholipid binding"/>
    <property type="evidence" value="ECO:0007669"/>
    <property type="project" value="TreeGrafter"/>
</dbReference>
<dbReference type="GO" id="GO:0009245">
    <property type="term" value="P:lipid A biosynthetic process"/>
    <property type="evidence" value="ECO:0007669"/>
    <property type="project" value="UniProtKB-UniRule"/>
</dbReference>
<dbReference type="CDD" id="cd01635">
    <property type="entry name" value="Glycosyltransferase_GTB-type"/>
    <property type="match status" value="1"/>
</dbReference>
<dbReference type="HAMAP" id="MF_00392">
    <property type="entry name" value="LpxB"/>
    <property type="match status" value="1"/>
</dbReference>
<dbReference type="InterPro" id="IPR003835">
    <property type="entry name" value="Glyco_trans_19"/>
</dbReference>
<dbReference type="NCBIfam" id="TIGR00215">
    <property type="entry name" value="lpxB"/>
    <property type="match status" value="1"/>
</dbReference>
<dbReference type="PANTHER" id="PTHR30372">
    <property type="entry name" value="LIPID-A-DISACCHARIDE SYNTHASE"/>
    <property type="match status" value="1"/>
</dbReference>
<dbReference type="PANTHER" id="PTHR30372:SF4">
    <property type="entry name" value="LIPID-A-DISACCHARIDE SYNTHASE, MITOCHONDRIAL-RELATED"/>
    <property type="match status" value="1"/>
</dbReference>
<dbReference type="Pfam" id="PF02684">
    <property type="entry name" value="LpxB"/>
    <property type="match status" value="1"/>
</dbReference>
<dbReference type="SUPFAM" id="SSF53756">
    <property type="entry name" value="UDP-Glycosyltransferase/glycogen phosphorylase"/>
    <property type="match status" value="1"/>
</dbReference>
<accession>B2I7N8</accession>
<gene>
    <name evidence="1" type="primary">lpxB</name>
    <name type="ordered locus">XfasM23_0318</name>
</gene>
<organism>
    <name type="scientific">Xylella fastidiosa (strain M23)</name>
    <dbReference type="NCBI Taxonomy" id="405441"/>
    <lineage>
        <taxon>Bacteria</taxon>
        <taxon>Pseudomonadati</taxon>
        <taxon>Pseudomonadota</taxon>
        <taxon>Gammaproteobacteria</taxon>
        <taxon>Lysobacterales</taxon>
        <taxon>Lysobacteraceae</taxon>
        <taxon>Xylella</taxon>
    </lineage>
</organism>